<feature type="chain" id="PRO_1000061186" description="Co-chaperonin GroES">
    <location>
        <begin position="1"/>
        <end position="94"/>
    </location>
</feature>
<keyword id="KW-0143">Chaperone</keyword>
<keyword id="KW-0963">Cytoplasm</keyword>
<dbReference type="EMBL" id="CP000813">
    <property type="protein sequence ID" value="ABV61229.1"/>
    <property type="molecule type" value="Genomic_DNA"/>
</dbReference>
<dbReference type="RefSeq" id="WP_003214120.1">
    <property type="nucleotide sequence ID" value="NZ_VEIS01000033.1"/>
</dbReference>
<dbReference type="SMR" id="A8FAG2"/>
<dbReference type="STRING" id="315750.BPUM_0534"/>
<dbReference type="GeneID" id="66362186"/>
<dbReference type="KEGG" id="bpu:BPUM_0534"/>
<dbReference type="eggNOG" id="COG0234">
    <property type="taxonomic scope" value="Bacteria"/>
</dbReference>
<dbReference type="HOGENOM" id="CLU_132825_2_0_9"/>
<dbReference type="OrthoDB" id="9806791at2"/>
<dbReference type="Proteomes" id="UP000001355">
    <property type="component" value="Chromosome"/>
</dbReference>
<dbReference type="GO" id="GO:0005737">
    <property type="term" value="C:cytoplasm"/>
    <property type="evidence" value="ECO:0007669"/>
    <property type="project" value="UniProtKB-SubCell"/>
</dbReference>
<dbReference type="GO" id="GO:0005524">
    <property type="term" value="F:ATP binding"/>
    <property type="evidence" value="ECO:0007669"/>
    <property type="project" value="InterPro"/>
</dbReference>
<dbReference type="GO" id="GO:0046872">
    <property type="term" value="F:metal ion binding"/>
    <property type="evidence" value="ECO:0007669"/>
    <property type="project" value="TreeGrafter"/>
</dbReference>
<dbReference type="GO" id="GO:0044183">
    <property type="term" value="F:protein folding chaperone"/>
    <property type="evidence" value="ECO:0007669"/>
    <property type="project" value="InterPro"/>
</dbReference>
<dbReference type="GO" id="GO:0051087">
    <property type="term" value="F:protein-folding chaperone binding"/>
    <property type="evidence" value="ECO:0007669"/>
    <property type="project" value="TreeGrafter"/>
</dbReference>
<dbReference type="GO" id="GO:0051082">
    <property type="term" value="F:unfolded protein binding"/>
    <property type="evidence" value="ECO:0007669"/>
    <property type="project" value="TreeGrafter"/>
</dbReference>
<dbReference type="GO" id="GO:0051085">
    <property type="term" value="P:chaperone cofactor-dependent protein refolding"/>
    <property type="evidence" value="ECO:0007669"/>
    <property type="project" value="TreeGrafter"/>
</dbReference>
<dbReference type="CDD" id="cd00320">
    <property type="entry name" value="cpn10"/>
    <property type="match status" value="1"/>
</dbReference>
<dbReference type="FunFam" id="2.30.33.40:FF:000001">
    <property type="entry name" value="10 kDa chaperonin"/>
    <property type="match status" value="1"/>
</dbReference>
<dbReference type="Gene3D" id="2.30.33.40">
    <property type="entry name" value="GroES chaperonin"/>
    <property type="match status" value="1"/>
</dbReference>
<dbReference type="HAMAP" id="MF_00580">
    <property type="entry name" value="CH10"/>
    <property type="match status" value="1"/>
</dbReference>
<dbReference type="InterPro" id="IPR020818">
    <property type="entry name" value="Chaperonin_GroES"/>
</dbReference>
<dbReference type="InterPro" id="IPR037124">
    <property type="entry name" value="Chaperonin_GroES_sf"/>
</dbReference>
<dbReference type="InterPro" id="IPR018369">
    <property type="entry name" value="Chaprnonin_Cpn10_CS"/>
</dbReference>
<dbReference type="InterPro" id="IPR011032">
    <property type="entry name" value="GroES-like_sf"/>
</dbReference>
<dbReference type="NCBIfam" id="NF001527">
    <property type="entry name" value="PRK00364.1-2"/>
    <property type="match status" value="1"/>
</dbReference>
<dbReference type="NCBIfam" id="NF001530">
    <property type="entry name" value="PRK00364.1-6"/>
    <property type="match status" value="1"/>
</dbReference>
<dbReference type="NCBIfam" id="NF001531">
    <property type="entry name" value="PRK00364.2-2"/>
    <property type="match status" value="1"/>
</dbReference>
<dbReference type="NCBIfam" id="NF001532">
    <property type="entry name" value="PRK00364.2-3"/>
    <property type="match status" value="1"/>
</dbReference>
<dbReference type="NCBIfam" id="NF001533">
    <property type="entry name" value="PRK00364.2-4"/>
    <property type="match status" value="1"/>
</dbReference>
<dbReference type="NCBIfam" id="NF001534">
    <property type="entry name" value="PRK00364.2-5"/>
    <property type="match status" value="1"/>
</dbReference>
<dbReference type="PANTHER" id="PTHR10772">
    <property type="entry name" value="10 KDA HEAT SHOCK PROTEIN"/>
    <property type="match status" value="1"/>
</dbReference>
<dbReference type="PANTHER" id="PTHR10772:SF58">
    <property type="entry name" value="CO-CHAPERONIN GROES"/>
    <property type="match status" value="1"/>
</dbReference>
<dbReference type="Pfam" id="PF00166">
    <property type="entry name" value="Cpn10"/>
    <property type="match status" value="1"/>
</dbReference>
<dbReference type="PRINTS" id="PR00297">
    <property type="entry name" value="CHAPERONIN10"/>
</dbReference>
<dbReference type="SMART" id="SM00883">
    <property type="entry name" value="Cpn10"/>
    <property type="match status" value="1"/>
</dbReference>
<dbReference type="SUPFAM" id="SSF50129">
    <property type="entry name" value="GroES-like"/>
    <property type="match status" value="1"/>
</dbReference>
<dbReference type="PROSITE" id="PS00681">
    <property type="entry name" value="CHAPERONINS_CPN10"/>
    <property type="match status" value="1"/>
</dbReference>
<comment type="function">
    <text evidence="1">Together with the chaperonin GroEL, plays an essential role in assisting protein folding. The GroEL-GroES system forms a nano-cage that allows encapsulation of the non-native substrate proteins and provides a physical environment optimized to promote and accelerate protein folding. GroES binds to the apical surface of the GroEL ring, thereby capping the opening of the GroEL channel.</text>
</comment>
<comment type="subunit">
    <text evidence="1">Heptamer of 7 subunits arranged in a ring. Interacts with the chaperonin GroEL.</text>
</comment>
<comment type="subcellular location">
    <subcellularLocation>
        <location evidence="1">Cytoplasm</location>
    </subcellularLocation>
</comment>
<comment type="similarity">
    <text evidence="1">Belongs to the GroES chaperonin family.</text>
</comment>
<organism>
    <name type="scientific">Bacillus pumilus (strain SAFR-032)</name>
    <dbReference type="NCBI Taxonomy" id="315750"/>
    <lineage>
        <taxon>Bacteria</taxon>
        <taxon>Bacillati</taxon>
        <taxon>Bacillota</taxon>
        <taxon>Bacilli</taxon>
        <taxon>Bacillales</taxon>
        <taxon>Bacillaceae</taxon>
        <taxon>Bacillus</taxon>
    </lineage>
</organism>
<reference key="1">
    <citation type="journal article" date="2007" name="PLoS ONE">
        <title>Paradoxical DNA repair and peroxide resistance gene conservation in Bacillus pumilus SAFR-032.</title>
        <authorList>
            <person name="Gioia J."/>
            <person name="Yerrapragada S."/>
            <person name="Qin X."/>
            <person name="Jiang H."/>
            <person name="Igboeli O.C."/>
            <person name="Muzny D."/>
            <person name="Dugan-Rocha S."/>
            <person name="Ding Y."/>
            <person name="Hawes A."/>
            <person name="Liu W."/>
            <person name="Perez L."/>
            <person name="Kovar C."/>
            <person name="Dinh H."/>
            <person name="Lee S."/>
            <person name="Nazareth L."/>
            <person name="Blyth P."/>
            <person name="Holder M."/>
            <person name="Buhay C."/>
            <person name="Tirumalai M.R."/>
            <person name="Liu Y."/>
            <person name="Dasgupta I."/>
            <person name="Bokhetache L."/>
            <person name="Fujita M."/>
            <person name="Karouia F."/>
            <person name="Eswara Moorthy P."/>
            <person name="Siefert J."/>
            <person name="Uzman A."/>
            <person name="Buzumbo P."/>
            <person name="Verma A."/>
            <person name="Zwiya H."/>
            <person name="McWilliams B.D."/>
            <person name="Olowu A."/>
            <person name="Clinkenbeard K.D."/>
            <person name="Newcombe D."/>
            <person name="Golebiewski L."/>
            <person name="Petrosino J.F."/>
            <person name="Nicholson W.L."/>
            <person name="Fox G.E."/>
            <person name="Venkateswaran K."/>
            <person name="Highlander S.K."/>
            <person name="Weinstock G.M."/>
        </authorList>
    </citation>
    <scope>NUCLEOTIDE SEQUENCE [LARGE SCALE GENOMIC DNA]</scope>
    <source>
        <strain>SAFR-032</strain>
    </source>
</reference>
<name>CH10_BACP2</name>
<accession>A8FAG2</accession>
<sequence>MLKPLGDRVIIELVESEEKTASGIVLPDSAKEKPQEGKIVAAGSGRVLESGERVALEVNTGDRIIFSKYAGTEVKYEGKEYLILRESDILAVIG</sequence>
<evidence type="ECO:0000255" key="1">
    <source>
        <dbReference type="HAMAP-Rule" id="MF_00580"/>
    </source>
</evidence>
<gene>
    <name evidence="1" type="primary">groES</name>
    <name evidence="1" type="synonym">groS</name>
    <name type="ordered locus">BPUM_0534</name>
</gene>
<protein>
    <recommendedName>
        <fullName evidence="1">Co-chaperonin GroES</fullName>
    </recommendedName>
    <alternativeName>
        <fullName evidence="1">10 kDa chaperonin</fullName>
    </alternativeName>
    <alternativeName>
        <fullName evidence="1">Chaperonin-10</fullName>
        <shortName evidence="1">Cpn10</shortName>
    </alternativeName>
</protein>
<proteinExistence type="inferred from homology"/>